<name>RL4_CORGL</name>
<dbReference type="EMBL" id="BA000036">
    <property type="protein sequence ID" value="BAB97900.1"/>
    <property type="molecule type" value="Genomic_DNA"/>
</dbReference>
<dbReference type="EMBL" id="BX927149">
    <property type="protein sequence ID" value="CAF19218.1"/>
    <property type="molecule type" value="Genomic_DNA"/>
</dbReference>
<dbReference type="RefSeq" id="NP_599749.1">
    <property type="nucleotide sequence ID" value="NC_003450.3"/>
</dbReference>
<dbReference type="RefSeq" id="WP_003854293.1">
    <property type="nucleotide sequence ID" value="NC_006958.1"/>
</dbReference>
<dbReference type="SMR" id="Q8NT08"/>
<dbReference type="STRING" id="196627.cg0596"/>
<dbReference type="GeneID" id="1021511"/>
<dbReference type="KEGG" id="cgb:cg0596"/>
<dbReference type="KEGG" id="cgl:Cgl0507"/>
<dbReference type="PATRIC" id="fig|196627.13.peg.504"/>
<dbReference type="eggNOG" id="COG0088">
    <property type="taxonomic scope" value="Bacteria"/>
</dbReference>
<dbReference type="HOGENOM" id="CLU_041575_5_0_11"/>
<dbReference type="OrthoDB" id="9803201at2"/>
<dbReference type="BioCyc" id="CORYNE:G18NG-10069-MONOMER"/>
<dbReference type="Proteomes" id="UP000000582">
    <property type="component" value="Chromosome"/>
</dbReference>
<dbReference type="Proteomes" id="UP000001009">
    <property type="component" value="Chromosome"/>
</dbReference>
<dbReference type="GO" id="GO:1990904">
    <property type="term" value="C:ribonucleoprotein complex"/>
    <property type="evidence" value="ECO:0007669"/>
    <property type="project" value="UniProtKB-KW"/>
</dbReference>
<dbReference type="GO" id="GO:0005840">
    <property type="term" value="C:ribosome"/>
    <property type="evidence" value="ECO:0007669"/>
    <property type="project" value="UniProtKB-KW"/>
</dbReference>
<dbReference type="GO" id="GO:0019843">
    <property type="term" value="F:rRNA binding"/>
    <property type="evidence" value="ECO:0007669"/>
    <property type="project" value="UniProtKB-UniRule"/>
</dbReference>
<dbReference type="GO" id="GO:0003735">
    <property type="term" value="F:structural constituent of ribosome"/>
    <property type="evidence" value="ECO:0007669"/>
    <property type="project" value="InterPro"/>
</dbReference>
<dbReference type="GO" id="GO:0006412">
    <property type="term" value="P:translation"/>
    <property type="evidence" value="ECO:0007669"/>
    <property type="project" value="UniProtKB-UniRule"/>
</dbReference>
<dbReference type="FunFam" id="3.40.1370.10:FF:000004">
    <property type="entry name" value="50S ribosomal protein L4"/>
    <property type="match status" value="1"/>
</dbReference>
<dbReference type="Gene3D" id="3.40.1370.10">
    <property type="match status" value="1"/>
</dbReference>
<dbReference type="HAMAP" id="MF_01328_B">
    <property type="entry name" value="Ribosomal_uL4_B"/>
    <property type="match status" value="1"/>
</dbReference>
<dbReference type="InterPro" id="IPR002136">
    <property type="entry name" value="Ribosomal_uL4"/>
</dbReference>
<dbReference type="InterPro" id="IPR013005">
    <property type="entry name" value="Ribosomal_uL4-like"/>
</dbReference>
<dbReference type="InterPro" id="IPR023574">
    <property type="entry name" value="Ribosomal_uL4_dom_sf"/>
</dbReference>
<dbReference type="NCBIfam" id="TIGR03953">
    <property type="entry name" value="rplD_bact"/>
    <property type="match status" value="1"/>
</dbReference>
<dbReference type="PANTHER" id="PTHR10746">
    <property type="entry name" value="50S RIBOSOMAL PROTEIN L4"/>
    <property type="match status" value="1"/>
</dbReference>
<dbReference type="PANTHER" id="PTHR10746:SF6">
    <property type="entry name" value="LARGE RIBOSOMAL SUBUNIT PROTEIN UL4M"/>
    <property type="match status" value="1"/>
</dbReference>
<dbReference type="Pfam" id="PF00573">
    <property type="entry name" value="Ribosomal_L4"/>
    <property type="match status" value="1"/>
</dbReference>
<dbReference type="SUPFAM" id="SSF52166">
    <property type="entry name" value="Ribosomal protein L4"/>
    <property type="match status" value="1"/>
</dbReference>
<evidence type="ECO:0000255" key="1">
    <source>
        <dbReference type="HAMAP-Rule" id="MF_01328"/>
    </source>
</evidence>
<evidence type="ECO:0000256" key="2">
    <source>
        <dbReference type="SAM" id="MobiDB-lite"/>
    </source>
</evidence>
<evidence type="ECO:0000305" key="3"/>
<protein>
    <recommendedName>
        <fullName evidence="1">Large ribosomal subunit protein uL4</fullName>
    </recommendedName>
    <alternativeName>
        <fullName evidence="3">50S ribosomal protein L4</fullName>
    </alternativeName>
</protein>
<reference key="1">
    <citation type="journal article" date="2003" name="Appl. Microbiol. Biotechnol.">
        <title>The Corynebacterium glutamicum genome: features and impacts on biotechnological processes.</title>
        <authorList>
            <person name="Ikeda M."/>
            <person name="Nakagawa S."/>
        </authorList>
    </citation>
    <scope>NUCLEOTIDE SEQUENCE [LARGE SCALE GENOMIC DNA]</scope>
    <source>
        <strain>ATCC 13032 / DSM 20300 / JCM 1318 / BCRC 11384 / CCUG 27702 / LMG 3730 / NBRC 12168 / NCIMB 10025 / NRRL B-2784 / 534</strain>
    </source>
</reference>
<reference key="2">
    <citation type="journal article" date="2003" name="J. Biotechnol.">
        <title>The complete Corynebacterium glutamicum ATCC 13032 genome sequence and its impact on the production of L-aspartate-derived amino acids and vitamins.</title>
        <authorList>
            <person name="Kalinowski J."/>
            <person name="Bathe B."/>
            <person name="Bartels D."/>
            <person name="Bischoff N."/>
            <person name="Bott M."/>
            <person name="Burkovski A."/>
            <person name="Dusch N."/>
            <person name="Eggeling L."/>
            <person name="Eikmanns B.J."/>
            <person name="Gaigalat L."/>
            <person name="Goesmann A."/>
            <person name="Hartmann M."/>
            <person name="Huthmacher K."/>
            <person name="Kraemer R."/>
            <person name="Linke B."/>
            <person name="McHardy A.C."/>
            <person name="Meyer F."/>
            <person name="Moeckel B."/>
            <person name="Pfefferle W."/>
            <person name="Puehler A."/>
            <person name="Rey D.A."/>
            <person name="Rueckert C."/>
            <person name="Rupp O."/>
            <person name="Sahm H."/>
            <person name="Wendisch V.F."/>
            <person name="Wiegraebe I."/>
            <person name="Tauch A."/>
        </authorList>
    </citation>
    <scope>NUCLEOTIDE SEQUENCE [LARGE SCALE GENOMIC DNA]</scope>
    <source>
        <strain>ATCC 13032 / DSM 20300 / JCM 1318 / BCRC 11384 / CCUG 27702 / LMG 3730 / NBRC 12168 / NCIMB 10025 / NRRL B-2784 / 534</strain>
    </source>
</reference>
<sequence length="218" mass="23609">MTNLKLDVQTADGNINGSVELPAEIFDREVSVALLHQVVNAQLAAARQGTHSTKTRGEVRGGGRKPFRQKGTGRARQGSIRAPHFTGGGISHGPKPRDYSQRTPKKMIKAALYGALSDRARNARIHVVSELVPGQTPSTKSAKAFIERLTERKSVLLVVSREDINAQKSANNLPGVHILAADQLNTYDVLKSDDVVFSVEALHTFINRASGAAQEEQN</sequence>
<organism>
    <name type="scientific">Corynebacterium glutamicum (strain ATCC 13032 / DSM 20300 / JCM 1318 / BCRC 11384 / CCUG 27702 / LMG 3730 / NBRC 12168 / NCIMB 10025 / NRRL B-2784 / 534)</name>
    <dbReference type="NCBI Taxonomy" id="196627"/>
    <lineage>
        <taxon>Bacteria</taxon>
        <taxon>Bacillati</taxon>
        <taxon>Actinomycetota</taxon>
        <taxon>Actinomycetes</taxon>
        <taxon>Mycobacteriales</taxon>
        <taxon>Corynebacteriaceae</taxon>
        <taxon>Corynebacterium</taxon>
    </lineage>
</organism>
<keyword id="KW-1185">Reference proteome</keyword>
<keyword id="KW-0687">Ribonucleoprotein</keyword>
<keyword id="KW-0689">Ribosomal protein</keyword>
<keyword id="KW-0694">RNA-binding</keyword>
<keyword id="KW-0699">rRNA-binding</keyword>
<comment type="function">
    <text evidence="1">One of the primary rRNA binding proteins, this protein initially binds near the 5'-end of the 23S rRNA. It is important during the early stages of 50S assembly. It makes multiple contacts with different domains of the 23S rRNA in the assembled 50S subunit and ribosome.</text>
</comment>
<comment type="function">
    <text evidence="1">Forms part of the polypeptide exit tunnel.</text>
</comment>
<comment type="subunit">
    <text evidence="1">Part of the 50S ribosomal subunit.</text>
</comment>
<comment type="similarity">
    <text evidence="1">Belongs to the universal ribosomal protein uL4 family.</text>
</comment>
<proteinExistence type="inferred from homology"/>
<accession>Q8NT08</accession>
<gene>
    <name evidence="1" type="primary">rplD</name>
    <name type="ordered locus">Cgl0507</name>
    <name type="ordered locus">cg0596</name>
</gene>
<feature type="chain" id="PRO_0000129212" description="Large ribosomal subunit protein uL4">
    <location>
        <begin position="1"/>
        <end position="218"/>
    </location>
</feature>
<feature type="region of interest" description="Disordered" evidence="2">
    <location>
        <begin position="46"/>
        <end position="102"/>
    </location>
</feature>
<feature type="compositionally biased region" description="Basic residues" evidence="2">
    <location>
        <begin position="62"/>
        <end position="73"/>
    </location>
</feature>